<proteinExistence type="inferred from homology"/>
<sequence length="89" mass="10481">MSITPERKQEMIKDYATKEGDTGSPEVQVAILTERITNLTEHFKIHKKDNHSRRGLLMMVSQRRRLLDYLKGKNVKRYEDLIGRLGIRK</sequence>
<dbReference type="EMBL" id="CP000230">
    <property type="protein sequence ID" value="ABC24578.1"/>
    <property type="molecule type" value="Genomic_DNA"/>
</dbReference>
<dbReference type="RefSeq" id="WP_011391531.1">
    <property type="nucleotide sequence ID" value="NC_007643.1"/>
</dbReference>
<dbReference type="RefSeq" id="YP_428865.1">
    <property type="nucleotide sequence ID" value="NC_007643.1"/>
</dbReference>
<dbReference type="SMR" id="Q2RMR7"/>
<dbReference type="STRING" id="269796.Rru_A3784"/>
<dbReference type="EnsemblBacteria" id="ABC24578">
    <property type="protein sequence ID" value="ABC24578"/>
    <property type="gene ID" value="Rru_A3784"/>
</dbReference>
<dbReference type="KEGG" id="rru:Rru_A3784"/>
<dbReference type="PATRIC" id="fig|269796.9.peg.3906"/>
<dbReference type="eggNOG" id="COG0184">
    <property type="taxonomic scope" value="Bacteria"/>
</dbReference>
<dbReference type="HOGENOM" id="CLU_148518_0_0_5"/>
<dbReference type="PhylomeDB" id="Q2RMR7"/>
<dbReference type="Proteomes" id="UP000001929">
    <property type="component" value="Chromosome"/>
</dbReference>
<dbReference type="GO" id="GO:0022627">
    <property type="term" value="C:cytosolic small ribosomal subunit"/>
    <property type="evidence" value="ECO:0007669"/>
    <property type="project" value="TreeGrafter"/>
</dbReference>
<dbReference type="GO" id="GO:0019843">
    <property type="term" value="F:rRNA binding"/>
    <property type="evidence" value="ECO:0007669"/>
    <property type="project" value="UniProtKB-UniRule"/>
</dbReference>
<dbReference type="GO" id="GO:0003735">
    <property type="term" value="F:structural constituent of ribosome"/>
    <property type="evidence" value="ECO:0007669"/>
    <property type="project" value="InterPro"/>
</dbReference>
<dbReference type="GO" id="GO:0006412">
    <property type="term" value="P:translation"/>
    <property type="evidence" value="ECO:0007669"/>
    <property type="project" value="UniProtKB-UniRule"/>
</dbReference>
<dbReference type="CDD" id="cd00353">
    <property type="entry name" value="Ribosomal_S15p_S13e"/>
    <property type="match status" value="1"/>
</dbReference>
<dbReference type="FunFam" id="1.10.287.10:FF:000002">
    <property type="entry name" value="30S ribosomal protein S15"/>
    <property type="match status" value="1"/>
</dbReference>
<dbReference type="Gene3D" id="6.10.250.3130">
    <property type="match status" value="1"/>
</dbReference>
<dbReference type="Gene3D" id="1.10.287.10">
    <property type="entry name" value="S15/NS1, RNA-binding"/>
    <property type="match status" value="1"/>
</dbReference>
<dbReference type="HAMAP" id="MF_01343_B">
    <property type="entry name" value="Ribosomal_uS15_B"/>
    <property type="match status" value="1"/>
</dbReference>
<dbReference type="InterPro" id="IPR000589">
    <property type="entry name" value="Ribosomal_uS15"/>
</dbReference>
<dbReference type="InterPro" id="IPR005290">
    <property type="entry name" value="Ribosomal_uS15_bac-type"/>
</dbReference>
<dbReference type="InterPro" id="IPR009068">
    <property type="entry name" value="uS15_NS1_RNA-bd_sf"/>
</dbReference>
<dbReference type="NCBIfam" id="TIGR00952">
    <property type="entry name" value="S15_bact"/>
    <property type="match status" value="1"/>
</dbReference>
<dbReference type="PANTHER" id="PTHR23321">
    <property type="entry name" value="RIBOSOMAL PROTEIN S15, BACTERIAL AND ORGANELLAR"/>
    <property type="match status" value="1"/>
</dbReference>
<dbReference type="PANTHER" id="PTHR23321:SF26">
    <property type="entry name" value="SMALL RIBOSOMAL SUBUNIT PROTEIN US15M"/>
    <property type="match status" value="1"/>
</dbReference>
<dbReference type="Pfam" id="PF00312">
    <property type="entry name" value="Ribosomal_S15"/>
    <property type="match status" value="1"/>
</dbReference>
<dbReference type="SMART" id="SM01387">
    <property type="entry name" value="Ribosomal_S15"/>
    <property type="match status" value="1"/>
</dbReference>
<dbReference type="SUPFAM" id="SSF47060">
    <property type="entry name" value="S15/NS1 RNA-binding domain"/>
    <property type="match status" value="1"/>
</dbReference>
<dbReference type="PROSITE" id="PS00362">
    <property type="entry name" value="RIBOSOMAL_S15"/>
    <property type="match status" value="1"/>
</dbReference>
<reference key="1">
    <citation type="journal article" date="2011" name="Stand. Genomic Sci.">
        <title>Complete genome sequence of Rhodospirillum rubrum type strain (S1).</title>
        <authorList>
            <person name="Munk A.C."/>
            <person name="Copeland A."/>
            <person name="Lucas S."/>
            <person name="Lapidus A."/>
            <person name="Del Rio T.G."/>
            <person name="Barry K."/>
            <person name="Detter J.C."/>
            <person name="Hammon N."/>
            <person name="Israni S."/>
            <person name="Pitluck S."/>
            <person name="Brettin T."/>
            <person name="Bruce D."/>
            <person name="Han C."/>
            <person name="Tapia R."/>
            <person name="Gilna P."/>
            <person name="Schmutz J."/>
            <person name="Larimer F."/>
            <person name="Land M."/>
            <person name="Kyrpides N.C."/>
            <person name="Mavromatis K."/>
            <person name="Richardson P."/>
            <person name="Rohde M."/>
            <person name="Goeker M."/>
            <person name="Klenk H.P."/>
            <person name="Zhang Y."/>
            <person name="Roberts G.P."/>
            <person name="Reslewic S."/>
            <person name="Schwartz D.C."/>
        </authorList>
    </citation>
    <scope>NUCLEOTIDE SEQUENCE [LARGE SCALE GENOMIC DNA]</scope>
    <source>
        <strain>ATCC 11170 / ATH 1.1.1 / DSM 467 / LMG 4362 / NCIMB 8255 / S1</strain>
    </source>
</reference>
<protein>
    <recommendedName>
        <fullName evidence="1">Small ribosomal subunit protein uS15</fullName>
    </recommendedName>
    <alternativeName>
        <fullName evidence="3">30S ribosomal protein S15</fullName>
    </alternativeName>
</protein>
<keyword id="KW-1185">Reference proteome</keyword>
<keyword id="KW-0687">Ribonucleoprotein</keyword>
<keyword id="KW-0689">Ribosomal protein</keyword>
<keyword id="KW-0694">RNA-binding</keyword>
<keyword id="KW-0699">rRNA-binding</keyword>
<gene>
    <name evidence="1" type="primary">rpsO</name>
    <name type="ordered locus">Rru_A3784</name>
</gene>
<comment type="function">
    <text evidence="1">One of the primary rRNA binding proteins, it binds directly to 16S rRNA where it helps nucleate assembly of the platform of the 30S subunit by binding and bridging several RNA helices of the 16S rRNA.</text>
</comment>
<comment type="function">
    <text evidence="1">Forms an intersubunit bridge (bridge B4) with the 23S rRNA of the 50S subunit in the ribosome.</text>
</comment>
<comment type="subunit">
    <text evidence="1">Part of the 30S ribosomal subunit. Forms a bridge to the 50S subunit in the 70S ribosome, contacting the 23S rRNA.</text>
</comment>
<comment type="similarity">
    <text evidence="1">Belongs to the universal ribosomal protein uS15 family.</text>
</comment>
<accession>Q2RMR7</accession>
<organism>
    <name type="scientific">Rhodospirillum rubrum (strain ATCC 11170 / ATH 1.1.1 / DSM 467 / LMG 4362 / NCIMB 8255 / S1)</name>
    <dbReference type="NCBI Taxonomy" id="269796"/>
    <lineage>
        <taxon>Bacteria</taxon>
        <taxon>Pseudomonadati</taxon>
        <taxon>Pseudomonadota</taxon>
        <taxon>Alphaproteobacteria</taxon>
        <taxon>Rhodospirillales</taxon>
        <taxon>Rhodospirillaceae</taxon>
        <taxon>Rhodospirillum</taxon>
    </lineage>
</organism>
<name>RS15_RHORT</name>
<evidence type="ECO:0000255" key="1">
    <source>
        <dbReference type="HAMAP-Rule" id="MF_01343"/>
    </source>
</evidence>
<evidence type="ECO:0000256" key="2">
    <source>
        <dbReference type="SAM" id="MobiDB-lite"/>
    </source>
</evidence>
<evidence type="ECO:0000305" key="3"/>
<feature type="chain" id="PRO_0000255524" description="Small ribosomal subunit protein uS15">
    <location>
        <begin position="1"/>
        <end position="89"/>
    </location>
</feature>
<feature type="region of interest" description="Disordered" evidence="2">
    <location>
        <begin position="1"/>
        <end position="23"/>
    </location>
</feature>
<feature type="compositionally biased region" description="Basic and acidic residues" evidence="2">
    <location>
        <begin position="1"/>
        <end position="21"/>
    </location>
</feature>